<protein>
    <recommendedName>
        <fullName evidence="1">Undecaprenyl phosphate-alpha-4-amino-4-deoxy-L-arabinose arabinosyl transferase</fullName>
        <ecNumber evidence="1">2.4.2.43</ecNumber>
    </recommendedName>
    <alternativeName>
        <fullName evidence="1">4-amino-4-deoxy-L-arabinose lipid A transferase</fullName>
    </alternativeName>
    <alternativeName>
        <fullName evidence="1">Lipid IV(A) 4-amino-4-deoxy-L-arabinosyltransferase</fullName>
    </alternativeName>
    <alternativeName>
        <fullName evidence="1">Undecaprenyl phosphate-alpha-L-Ara4N transferase</fullName>
    </alternativeName>
</protein>
<gene>
    <name evidence="1" type="primary">arnT</name>
    <name type="ordered locus">YPDSF_0732</name>
</gene>
<feature type="chain" id="PRO_1000065672" description="Undecaprenyl phosphate-alpha-4-amino-4-deoxy-L-arabinose arabinosyl transferase">
    <location>
        <begin position="1"/>
        <end position="554"/>
    </location>
</feature>
<feature type="transmembrane region" description="Helical" evidence="1">
    <location>
        <begin position="4"/>
        <end position="24"/>
    </location>
</feature>
<feature type="transmembrane region" description="Helical" evidence="1">
    <location>
        <begin position="87"/>
        <end position="107"/>
    </location>
</feature>
<feature type="transmembrane region" description="Helical" evidence="1">
    <location>
        <begin position="115"/>
        <end position="135"/>
    </location>
</feature>
<feature type="transmembrane region" description="Helical" evidence="1">
    <location>
        <begin position="178"/>
        <end position="198"/>
    </location>
</feature>
<feature type="transmembrane region" description="Helical" evidence="1">
    <location>
        <begin position="206"/>
        <end position="226"/>
    </location>
</feature>
<feature type="transmembrane region" description="Helical" evidence="1">
    <location>
        <begin position="262"/>
        <end position="282"/>
    </location>
</feature>
<feature type="transmembrane region" description="Helical" evidence="1">
    <location>
        <begin position="293"/>
        <end position="313"/>
    </location>
</feature>
<feature type="transmembrane region" description="Helical" evidence="1">
    <location>
        <begin position="315"/>
        <end position="335"/>
    </location>
</feature>
<feature type="transmembrane region" description="Helical" evidence="1">
    <location>
        <begin position="351"/>
        <end position="371"/>
    </location>
</feature>
<feature type="transmembrane region" description="Helical" evidence="1">
    <location>
        <begin position="384"/>
        <end position="404"/>
    </location>
</feature>
<feature type="transmembrane region" description="Helical" evidence="1">
    <location>
        <begin position="414"/>
        <end position="434"/>
    </location>
</feature>
<name>ARNT_YERPP</name>
<sequence>MKLLKDSGAALLALFFVLVYLLPVNSRLLWQPDETRYAEISREMLQRGDWVVPYFMDIRYFEKPVAGYWFNNISQWIFGDSNFAVRFGSIFSTALSAVLVYWLATLLWRNRSTSVLATLIYLSFLLVFGIGTYAVLDPMISLWLTAAMVSFYLTLKAENWQQKVGAYALLGVACGMGFMTKGFLALAVPVIAVLPIVIQQKRIKDLVVFGPIAIVCAVLLSLPWALAIAQREPDFWNYFFWVEHIQRFAEASAQHKSPIWYYLPILCIGVLPWLGLLPGALFKGWRERATKPELFFLLSWVVMPLLFFSVAKGKLPTYILPCMAPLSLLMAAYATDCANNIRMRALKINGVINLLFGVACALVIVVIGLGLVKDIVAYGPQENQKVWLGVLAFAGWGVTGFITLRNNARNWRWAAACPLLFILLVGYLIPQQVVDSKQPQNFIKNNFSELSSSRYVLTDSVGVAAGLAWELKRSDILMFSEKGELTYGLAYPDSQDNYISNDDFPTWLAQARKEGDVSLVVQLAKNEALPAHLPPADKVNLMNRLALLWYQKTP</sequence>
<reference key="1">
    <citation type="submission" date="2007-02" db="EMBL/GenBank/DDBJ databases">
        <title>Complete sequence of chromosome of Yersinia pestis Pestoides F.</title>
        <authorList>
            <consortium name="US DOE Joint Genome Institute"/>
            <person name="Copeland A."/>
            <person name="Lucas S."/>
            <person name="Lapidus A."/>
            <person name="Barry K."/>
            <person name="Detter J.C."/>
            <person name="Glavina del Rio T."/>
            <person name="Hammon N."/>
            <person name="Israni S."/>
            <person name="Dalin E."/>
            <person name="Tice H."/>
            <person name="Pitluck S."/>
            <person name="Di Bartolo G."/>
            <person name="Chain P."/>
            <person name="Malfatti S."/>
            <person name="Shin M."/>
            <person name="Vergez L."/>
            <person name="Schmutz J."/>
            <person name="Larimer F."/>
            <person name="Land M."/>
            <person name="Hauser L."/>
            <person name="Worsham P."/>
            <person name="Chu M."/>
            <person name="Bearden S."/>
            <person name="Garcia E."/>
            <person name="Richardson P."/>
        </authorList>
    </citation>
    <scope>NUCLEOTIDE SEQUENCE [LARGE SCALE GENOMIC DNA]</scope>
    <source>
        <strain>Pestoides F</strain>
    </source>
</reference>
<comment type="function">
    <text evidence="1">Catalyzes the transfer of the L-Ara4N moiety of the glycolipid undecaprenyl phosphate-alpha-L-Ara4N to lipid A. The modified arabinose is attached to lipid A and is required for resistance to polymyxin and cationic antimicrobial peptides.</text>
</comment>
<comment type="catalytic activity">
    <reaction evidence="1">
        <text>4-amino-4-deoxy-alpha-L-arabinopyranosyl di-trans,octa-cis-undecaprenyl phosphate + lipid IVA = lipid IIA + di-trans,octa-cis-undecaprenyl phosphate.</text>
        <dbReference type="EC" id="2.4.2.43"/>
    </reaction>
</comment>
<comment type="pathway">
    <text evidence="1">Lipopolysaccharide metabolism; 4-amino-4-deoxy-beta-L-arabinose-lipid A biosynthesis.</text>
</comment>
<comment type="subcellular location">
    <subcellularLocation>
        <location evidence="1">Cell inner membrane</location>
        <topology evidence="1">Multi-pass membrane protein</topology>
    </subcellularLocation>
</comment>
<comment type="similarity">
    <text evidence="1">Belongs to the glycosyltransferase 83 family.</text>
</comment>
<accession>A4TIM6</accession>
<evidence type="ECO:0000255" key="1">
    <source>
        <dbReference type="HAMAP-Rule" id="MF_01165"/>
    </source>
</evidence>
<organism>
    <name type="scientific">Yersinia pestis (strain Pestoides F)</name>
    <dbReference type="NCBI Taxonomy" id="386656"/>
    <lineage>
        <taxon>Bacteria</taxon>
        <taxon>Pseudomonadati</taxon>
        <taxon>Pseudomonadota</taxon>
        <taxon>Gammaproteobacteria</taxon>
        <taxon>Enterobacterales</taxon>
        <taxon>Yersiniaceae</taxon>
        <taxon>Yersinia</taxon>
    </lineage>
</organism>
<proteinExistence type="inferred from homology"/>
<dbReference type="EC" id="2.4.2.43" evidence="1"/>
<dbReference type="EMBL" id="CP000668">
    <property type="protein sequence ID" value="ABP39138.1"/>
    <property type="molecule type" value="Genomic_DNA"/>
</dbReference>
<dbReference type="RefSeq" id="WP_002211821.1">
    <property type="nucleotide sequence ID" value="NZ_CP009715.1"/>
</dbReference>
<dbReference type="SMR" id="A4TIM6"/>
<dbReference type="CAZy" id="GT83">
    <property type="family name" value="Glycosyltransferase Family 83"/>
</dbReference>
<dbReference type="GeneID" id="57976259"/>
<dbReference type="KEGG" id="ypp:YPDSF_0732"/>
<dbReference type="PATRIC" id="fig|386656.14.peg.3137"/>
<dbReference type="UniPathway" id="UPA00037"/>
<dbReference type="GO" id="GO:0005886">
    <property type="term" value="C:plasma membrane"/>
    <property type="evidence" value="ECO:0007669"/>
    <property type="project" value="UniProtKB-SubCell"/>
</dbReference>
<dbReference type="GO" id="GO:0103015">
    <property type="term" value="F:4-amino-4-deoxy-L-arabinose transferase activity"/>
    <property type="evidence" value="ECO:0007669"/>
    <property type="project" value="UniProtKB-EC"/>
</dbReference>
<dbReference type="GO" id="GO:0000030">
    <property type="term" value="F:mannosyltransferase activity"/>
    <property type="evidence" value="ECO:0007669"/>
    <property type="project" value="InterPro"/>
</dbReference>
<dbReference type="GO" id="GO:0009245">
    <property type="term" value="P:lipid A biosynthetic process"/>
    <property type="evidence" value="ECO:0007669"/>
    <property type="project" value="UniProtKB-UniRule"/>
</dbReference>
<dbReference type="GO" id="GO:0009103">
    <property type="term" value="P:lipopolysaccharide biosynthetic process"/>
    <property type="evidence" value="ECO:0007669"/>
    <property type="project" value="UniProtKB-KW"/>
</dbReference>
<dbReference type="GO" id="GO:0006493">
    <property type="term" value="P:protein O-linked glycosylation"/>
    <property type="evidence" value="ECO:0007669"/>
    <property type="project" value="InterPro"/>
</dbReference>
<dbReference type="GO" id="GO:0010041">
    <property type="term" value="P:response to iron(III) ion"/>
    <property type="evidence" value="ECO:0007669"/>
    <property type="project" value="TreeGrafter"/>
</dbReference>
<dbReference type="HAMAP" id="MF_01165">
    <property type="entry name" value="ArnT_transfer"/>
    <property type="match status" value="1"/>
</dbReference>
<dbReference type="InterPro" id="IPR022839">
    <property type="entry name" value="ArnT_tfrase"/>
</dbReference>
<dbReference type="InterPro" id="IPR003342">
    <property type="entry name" value="Glyco_trans_39/83"/>
</dbReference>
<dbReference type="InterPro" id="IPR050297">
    <property type="entry name" value="LipidA_mod_glycosyltrf_83"/>
</dbReference>
<dbReference type="NCBIfam" id="NF009784">
    <property type="entry name" value="PRK13279.1"/>
    <property type="match status" value="1"/>
</dbReference>
<dbReference type="PANTHER" id="PTHR33908">
    <property type="entry name" value="MANNOSYLTRANSFERASE YKCB-RELATED"/>
    <property type="match status" value="1"/>
</dbReference>
<dbReference type="PANTHER" id="PTHR33908:SF3">
    <property type="entry name" value="UNDECAPRENYL PHOSPHATE-ALPHA-4-AMINO-4-DEOXY-L-ARABINOSE ARABINOSYL TRANSFERASE"/>
    <property type="match status" value="1"/>
</dbReference>
<dbReference type="Pfam" id="PF02366">
    <property type="entry name" value="PMT"/>
    <property type="match status" value="1"/>
</dbReference>
<keyword id="KW-0997">Cell inner membrane</keyword>
<keyword id="KW-1003">Cell membrane</keyword>
<keyword id="KW-0328">Glycosyltransferase</keyword>
<keyword id="KW-0441">Lipid A biosynthesis</keyword>
<keyword id="KW-0444">Lipid biosynthesis</keyword>
<keyword id="KW-0443">Lipid metabolism</keyword>
<keyword id="KW-0448">Lipopolysaccharide biosynthesis</keyword>
<keyword id="KW-0472">Membrane</keyword>
<keyword id="KW-0808">Transferase</keyword>
<keyword id="KW-0812">Transmembrane</keyword>
<keyword id="KW-1133">Transmembrane helix</keyword>